<gene>
    <name evidence="16" type="primary">CCM1</name>
    <name evidence="18" type="synonym">DMR1</name>
    <name evidence="17" type="synonym">RRG2</name>
    <name type="ordered locus">YGR150C</name>
    <name type="ORF">G6642</name>
</gene>
<keyword id="KW-0002">3D-structure</keyword>
<keyword id="KW-0496">Mitochondrion</keyword>
<keyword id="KW-0507">mRNA processing</keyword>
<keyword id="KW-0508">mRNA splicing</keyword>
<keyword id="KW-1185">Reference proteome</keyword>
<keyword id="KW-0677">Repeat</keyword>
<keyword id="KW-0809">Transit peptide</keyword>
<evidence type="ECO:0000255" key="1"/>
<evidence type="ECO:0000255" key="2">
    <source>
        <dbReference type="PROSITE-ProRule" id="PRU00708"/>
    </source>
</evidence>
<evidence type="ECO:0000256" key="3">
    <source>
        <dbReference type="SAM" id="MobiDB-lite"/>
    </source>
</evidence>
<evidence type="ECO:0000269" key="4">
    <source>
    </source>
</evidence>
<evidence type="ECO:0000269" key="5">
    <source>
    </source>
</evidence>
<evidence type="ECO:0000269" key="6">
    <source>
    </source>
</evidence>
<evidence type="ECO:0000269" key="7">
    <source>
    </source>
</evidence>
<evidence type="ECO:0000269" key="8">
    <source>
    </source>
</evidence>
<evidence type="ECO:0000269" key="9">
    <source>
    </source>
</evidence>
<evidence type="ECO:0000269" key="10">
    <source>
    </source>
</evidence>
<evidence type="ECO:0000269" key="11">
    <source>
    </source>
</evidence>
<evidence type="ECO:0000269" key="12">
    <source>
    </source>
</evidence>
<evidence type="ECO:0000269" key="13">
    <source>
    </source>
</evidence>
<evidence type="ECO:0000269" key="14">
    <source>
    </source>
</evidence>
<evidence type="ECO:0000269" key="15">
    <source>
    </source>
</evidence>
<evidence type="ECO:0000303" key="16">
    <source>
    </source>
</evidence>
<evidence type="ECO:0000303" key="17">
    <source>
    </source>
</evidence>
<evidence type="ECO:0000303" key="18">
    <source>
    </source>
</evidence>
<evidence type="ECO:0000305" key="19"/>
<evidence type="ECO:0007744" key="20">
    <source>
        <dbReference type="PDB" id="8D8J"/>
    </source>
</evidence>
<evidence type="ECO:0007744" key="21">
    <source>
        <dbReference type="PDB" id="8D8K"/>
    </source>
</evidence>
<evidence type="ECO:0007829" key="22">
    <source>
        <dbReference type="PDB" id="8D8K"/>
    </source>
</evidence>
<sequence>MYMARCGPKNNVLCFPFQLSFLFSKRLINKRFKYTLQTEDEKNMMGSLSKNKIITPEDVEFKLAQLREFSNTLKERIHNTKSVNSDGHQSNSIAPISEDSRNVNVTKTSSVPNEEKSKNLSDLIHSSFLEKMDHLVPKVIRERVADDDILAKNLFDRSHSNWAPVIDRLYVSEKRFMDIDSREFSVWLNGTVKYLPFHSILHLDEMLLEQINGDVVKFNTHMYECIFNNLGNLKPTNFNQDGTNDKVILKMKELLERYDKALKITEERINKKEGFPSKVPKMTQAILNNCLKYSTKCSSFHDMDYFITKFRDDYGITPNKQNLTTVIQFYSRKEMTKQAWNTFDTMKFLSTKHFPDICTYNTMLRICEKERNFPKALDLFQEIQDHNIKPTTNTYIMMARVLASSSSNAVVSEGKSDSLRLLGWKYLHELEDKNLYRHKKDDLNLFLAMMALAAFDGDIELSRALYYLFIAKKYKTLCANWKGNILVDQDTIWKSTLMPEMLNYLMLAYARFDPRNLPVLSGYEKGIELRRKFLREFDSSMRLDDTDKLVKFKLPFLPISDLNSEAQVLAESNAIWSFNMENGGTRNTLTSSNEAALEDIKKYRQLLDSFAQEAEDFNEFKFKVMYEVTKMQRESINVNVFNKISLHTYLSIPINLKQQKEFLRRLTFFTFQQHEFEAVIKRLYEGYRNIPSSHTRDQNSISTEAISVSKPETTEDLNLIMHDIWYITCLRHKIMMDTTLYELVMKAAIEFQNEDLAKKVWNDRGKFRTTVPFLKMDQRIRIAKDQKFAHLMVEFFTKQGKYSDAIAIILSSKNRFNWTYSMVRNLHKALEEIEDRNSVEILLDVVNKKSHAKALKWEEQELNM</sequence>
<dbReference type="EMBL" id="X85807">
    <property type="protein sequence ID" value="CAA59808.1"/>
    <property type="molecule type" value="Genomic_DNA"/>
</dbReference>
<dbReference type="EMBL" id="Z72935">
    <property type="protein sequence ID" value="CAA97164.1"/>
    <property type="molecule type" value="Genomic_DNA"/>
</dbReference>
<dbReference type="EMBL" id="BK006941">
    <property type="protein sequence ID" value="DAA08242.1"/>
    <property type="molecule type" value="Genomic_DNA"/>
</dbReference>
<dbReference type="PIR" id="S60441">
    <property type="entry name" value="S60441"/>
</dbReference>
<dbReference type="RefSeq" id="NP_011666.1">
    <property type="nucleotide sequence ID" value="NM_001181279.1"/>
</dbReference>
<dbReference type="PDB" id="8D8J">
    <property type="method" value="EM"/>
    <property type="resolution" value="3.80 A"/>
    <property type="chains" value="d=1-864"/>
</dbReference>
<dbReference type="PDB" id="8D8K">
    <property type="method" value="EM"/>
    <property type="resolution" value="3.13 A"/>
    <property type="chains" value="d=1-864"/>
</dbReference>
<dbReference type="PDBsum" id="8D8J"/>
<dbReference type="PDBsum" id="8D8K"/>
<dbReference type="SMR" id="P48237"/>
<dbReference type="BioGRID" id="33398">
    <property type="interactions" value="56"/>
</dbReference>
<dbReference type="DIP" id="DIP-6575N"/>
<dbReference type="FunCoup" id="P48237">
    <property type="interactions" value="149"/>
</dbReference>
<dbReference type="IntAct" id="P48237">
    <property type="interactions" value="8"/>
</dbReference>
<dbReference type="STRING" id="4932.YGR150C"/>
<dbReference type="iPTMnet" id="P48237"/>
<dbReference type="PaxDb" id="4932-YGR150C"/>
<dbReference type="PeptideAtlas" id="P48237"/>
<dbReference type="EnsemblFungi" id="YGR150C_mRNA">
    <property type="protein sequence ID" value="YGR150C"/>
    <property type="gene ID" value="YGR150C"/>
</dbReference>
<dbReference type="GeneID" id="853053"/>
<dbReference type="KEGG" id="sce:YGR150C"/>
<dbReference type="AGR" id="SGD:S000003382"/>
<dbReference type="SGD" id="S000003382">
    <property type="gene designation" value="CCM1"/>
</dbReference>
<dbReference type="VEuPathDB" id="FungiDB:YGR150C"/>
<dbReference type="eggNOG" id="ENOG502QUX2">
    <property type="taxonomic scope" value="Eukaryota"/>
</dbReference>
<dbReference type="HOGENOM" id="CLU_334653_0_0_1"/>
<dbReference type="InParanoid" id="P48237"/>
<dbReference type="OMA" id="ESSAIWA"/>
<dbReference type="OrthoDB" id="185373at2759"/>
<dbReference type="BioCyc" id="YEAST:G3O-30853-MONOMER"/>
<dbReference type="BioGRID-ORCS" id="853053">
    <property type="hits" value="3 hits in 10 CRISPR screens"/>
</dbReference>
<dbReference type="PRO" id="PR:P48237"/>
<dbReference type="Proteomes" id="UP000002311">
    <property type="component" value="Chromosome VII"/>
</dbReference>
<dbReference type="RNAct" id="P48237">
    <property type="molecule type" value="protein"/>
</dbReference>
<dbReference type="GO" id="GO:0005739">
    <property type="term" value="C:mitochondrion"/>
    <property type="evidence" value="ECO:0000314"/>
    <property type="project" value="SGD"/>
</dbReference>
<dbReference type="GO" id="GO:0003729">
    <property type="term" value="F:mRNA binding"/>
    <property type="evidence" value="ECO:0000318"/>
    <property type="project" value="GO_Central"/>
</dbReference>
<dbReference type="GO" id="GO:0019843">
    <property type="term" value="F:rRNA binding"/>
    <property type="evidence" value="ECO:0000314"/>
    <property type="project" value="SGD"/>
</dbReference>
<dbReference type="GO" id="GO:0000002">
    <property type="term" value="P:mitochondrial genome maintenance"/>
    <property type="evidence" value="ECO:0000315"/>
    <property type="project" value="SGD"/>
</dbReference>
<dbReference type="GO" id="GO:0000963">
    <property type="term" value="P:mitochondrial RNA processing"/>
    <property type="evidence" value="ECO:0000315"/>
    <property type="project" value="SGD"/>
</dbReference>
<dbReference type="GO" id="GO:0007005">
    <property type="term" value="P:mitochondrion organization"/>
    <property type="evidence" value="ECO:0000318"/>
    <property type="project" value="GO_Central"/>
</dbReference>
<dbReference type="GO" id="GO:0006397">
    <property type="term" value="P:mRNA processing"/>
    <property type="evidence" value="ECO:0007669"/>
    <property type="project" value="UniProtKB-KW"/>
</dbReference>
<dbReference type="GO" id="GO:2000234">
    <property type="term" value="P:positive regulation of rRNA processing"/>
    <property type="evidence" value="ECO:0000315"/>
    <property type="project" value="SGD"/>
</dbReference>
<dbReference type="GO" id="GO:0006396">
    <property type="term" value="P:RNA processing"/>
    <property type="evidence" value="ECO:0000318"/>
    <property type="project" value="GO_Central"/>
</dbReference>
<dbReference type="GO" id="GO:0008380">
    <property type="term" value="P:RNA splicing"/>
    <property type="evidence" value="ECO:0000315"/>
    <property type="project" value="SGD"/>
</dbReference>
<dbReference type="GO" id="GO:0016072">
    <property type="term" value="P:rRNA metabolic process"/>
    <property type="evidence" value="ECO:0000315"/>
    <property type="project" value="SGD"/>
</dbReference>
<dbReference type="Gene3D" id="1.25.40.10">
    <property type="entry name" value="Tetratricopeptide repeat domain"/>
    <property type="match status" value="1"/>
</dbReference>
<dbReference type="InterPro" id="IPR002885">
    <property type="entry name" value="Pentatricopeptide_rpt"/>
</dbReference>
<dbReference type="InterPro" id="IPR011990">
    <property type="entry name" value="TPR-like_helical_dom_sf"/>
</dbReference>
<dbReference type="NCBIfam" id="TIGR00756">
    <property type="entry name" value="PPR"/>
    <property type="match status" value="1"/>
</dbReference>
<dbReference type="PANTHER" id="PTHR47936:SF1">
    <property type="entry name" value="PENTATRICOPEPTIDE REPEAT-CONTAINING PROTEIN GUN1, CHLOROPLASTIC"/>
    <property type="match status" value="1"/>
</dbReference>
<dbReference type="PANTHER" id="PTHR47936">
    <property type="entry name" value="PPR_LONG DOMAIN-CONTAINING PROTEIN"/>
    <property type="match status" value="1"/>
</dbReference>
<dbReference type="Pfam" id="PF13041">
    <property type="entry name" value="PPR_2"/>
    <property type="match status" value="1"/>
</dbReference>
<dbReference type="PROSITE" id="PS51375">
    <property type="entry name" value="PPR"/>
    <property type="match status" value="2"/>
</dbReference>
<name>CCM1_YEAST</name>
<reference key="1">
    <citation type="journal article" date="1995" name="Yeast">
        <title>The sequence of a 27 kb segment on the right arm of chromosome VII from Saccharomyces cerevisiae reveals MOL1, NAT2, RPL30B, RSR1, CYS4, PEM1/CHO2, NSR1 genes and ten new open reading frames.</title>
        <authorList>
            <person name="Skala J."/>
            <person name="Nawrocki A."/>
            <person name="Goffeau A."/>
        </authorList>
    </citation>
    <scope>NUCLEOTIDE SEQUENCE [GENOMIC DNA]</scope>
    <source>
        <strain>ATCC 204508 / S288c</strain>
    </source>
</reference>
<reference key="2">
    <citation type="journal article" date="1997" name="Nature">
        <title>The nucleotide sequence of Saccharomyces cerevisiae chromosome VII.</title>
        <authorList>
            <person name="Tettelin H."/>
            <person name="Agostoni-Carbone M.L."/>
            <person name="Albermann K."/>
            <person name="Albers M."/>
            <person name="Arroyo J."/>
            <person name="Backes U."/>
            <person name="Barreiros T."/>
            <person name="Bertani I."/>
            <person name="Bjourson A.J."/>
            <person name="Brueckner M."/>
            <person name="Bruschi C.V."/>
            <person name="Carignani G."/>
            <person name="Castagnoli L."/>
            <person name="Cerdan E."/>
            <person name="Clemente M.L."/>
            <person name="Coblenz A."/>
            <person name="Coglievina M."/>
            <person name="Coissac E."/>
            <person name="Defoor E."/>
            <person name="Del Bino S."/>
            <person name="Delius H."/>
            <person name="Delneri D."/>
            <person name="de Wergifosse P."/>
            <person name="Dujon B."/>
            <person name="Durand P."/>
            <person name="Entian K.-D."/>
            <person name="Eraso P."/>
            <person name="Escribano V."/>
            <person name="Fabiani L."/>
            <person name="Fartmann B."/>
            <person name="Feroli F."/>
            <person name="Feuermann M."/>
            <person name="Frontali L."/>
            <person name="Garcia-Gonzalez M."/>
            <person name="Garcia-Saez M.I."/>
            <person name="Goffeau A."/>
            <person name="Guerreiro P."/>
            <person name="Hani J."/>
            <person name="Hansen M."/>
            <person name="Hebling U."/>
            <person name="Hernandez K."/>
            <person name="Heumann K."/>
            <person name="Hilger F."/>
            <person name="Hofmann B."/>
            <person name="Indge K.J."/>
            <person name="James C.M."/>
            <person name="Klima R."/>
            <person name="Koetter P."/>
            <person name="Kramer B."/>
            <person name="Kramer W."/>
            <person name="Lauquin G."/>
            <person name="Leuther H."/>
            <person name="Louis E.J."/>
            <person name="Maillier E."/>
            <person name="Marconi A."/>
            <person name="Martegani E."/>
            <person name="Mazon M.J."/>
            <person name="Mazzoni C."/>
            <person name="McReynolds A.D.K."/>
            <person name="Melchioretto P."/>
            <person name="Mewes H.-W."/>
            <person name="Minenkova O."/>
            <person name="Mueller-Auer S."/>
            <person name="Nawrocki A."/>
            <person name="Netter P."/>
            <person name="Neu R."/>
            <person name="Nombela C."/>
            <person name="Oliver S.G."/>
            <person name="Panzeri L."/>
            <person name="Paoluzi S."/>
            <person name="Plevani P."/>
            <person name="Portetelle D."/>
            <person name="Portillo F."/>
            <person name="Potier S."/>
            <person name="Purnelle B."/>
            <person name="Rieger M."/>
            <person name="Riles L."/>
            <person name="Rinaldi T."/>
            <person name="Robben J."/>
            <person name="Rodrigues-Pousada C."/>
            <person name="Rodriguez-Belmonte E."/>
            <person name="Rodriguez-Torres A.M."/>
            <person name="Rose M."/>
            <person name="Ruzzi M."/>
            <person name="Saliola M."/>
            <person name="Sanchez-Perez M."/>
            <person name="Schaefer B."/>
            <person name="Schaefer M."/>
            <person name="Scharfe M."/>
            <person name="Schmidheini T."/>
            <person name="Schreer A."/>
            <person name="Skala J."/>
            <person name="Souciet J.-L."/>
            <person name="Steensma H.Y."/>
            <person name="Talla E."/>
            <person name="Thierry A."/>
            <person name="Vandenbol M."/>
            <person name="van der Aart Q.J.M."/>
            <person name="Van Dyck L."/>
            <person name="Vanoni M."/>
            <person name="Verhasselt P."/>
            <person name="Voet M."/>
            <person name="Volckaert G."/>
            <person name="Wambutt R."/>
            <person name="Watson M.D."/>
            <person name="Weber N."/>
            <person name="Wedler E."/>
            <person name="Wedler H."/>
            <person name="Wipfli P."/>
            <person name="Wolf K."/>
            <person name="Wright L.F."/>
            <person name="Zaccaria P."/>
            <person name="Zimmermann M."/>
            <person name="Zollner A."/>
            <person name="Kleine K."/>
        </authorList>
    </citation>
    <scope>NUCLEOTIDE SEQUENCE [LARGE SCALE GENOMIC DNA]</scope>
    <source>
        <strain>ATCC 204508 / S288c</strain>
    </source>
</reference>
<reference key="3">
    <citation type="journal article" date="2014" name="G3 (Bethesda)">
        <title>The reference genome sequence of Saccharomyces cerevisiae: Then and now.</title>
        <authorList>
            <person name="Engel S.R."/>
            <person name="Dietrich F.S."/>
            <person name="Fisk D.G."/>
            <person name="Binkley G."/>
            <person name="Balakrishnan R."/>
            <person name="Costanzo M.C."/>
            <person name="Dwight S.S."/>
            <person name="Hitz B.C."/>
            <person name="Karra K."/>
            <person name="Nash R.S."/>
            <person name="Weng S."/>
            <person name="Wong E.D."/>
            <person name="Lloyd P."/>
            <person name="Skrzypek M.S."/>
            <person name="Miyasato S.R."/>
            <person name="Simison M."/>
            <person name="Cherry J.M."/>
        </authorList>
    </citation>
    <scope>GENOME REANNOTATION</scope>
    <source>
        <strain>ATCC 204508 / S288c</strain>
    </source>
</reference>
<reference key="4">
    <citation type="journal article" date="2003" name="Nature">
        <title>Global analysis of protein localization in budding yeast.</title>
        <authorList>
            <person name="Huh W.-K."/>
            <person name="Falvo J.V."/>
            <person name="Gerke L.C."/>
            <person name="Carroll A.S."/>
            <person name="Howson R.W."/>
            <person name="Weissman J.S."/>
            <person name="O'Shea E.K."/>
        </authorList>
    </citation>
    <scope>SUBCELLULAR LOCATION [LARGE SCALE ANALYSIS]</scope>
</reference>
<reference key="5">
    <citation type="journal article" date="2003" name="Nature">
        <title>Global analysis of protein expression in yeast.</title>
        <authorList>
            <person name="Ghaemmaghami S."/>
            <person name="Huh W.-K."/>
            <person name="Bower K."/>
            <person name="Howson R.W."/>
            <person name="Belle A."/>
            <person name="Dephoure N."/>
            <person name="O'Shea E.K."/>
            <person name="Weissman J.S."/>
        </authorList>
    </citation>
    <scope>LEVEL OF PROTEIN EXPRESSION [LARGE SCALE ANALYSIS]</scope>
</reference>
<reference key="6">
    <citation type="journal article" date="2006" name="J. Proteome Res.">
        <title>Toward the complete yeast mitochondrial proteome: multidimensional separation techniques for mitochondrial proteomics.</title>
        <authorList>
            <person name="Reinders J."/>
            <person name="Zahedi R.P."/>
            <person name="Pfanner N."/>
            <person name="Meisinger C."/>
            <person name="Sickmann A."/>
        </authorList>
    </citation>
    <scope>SUBCELLULAR LOCATION [LARGE SCALE ANALYSIS]</scope>
    <scope>IDENTIFICATION BY MASS SPECTROMETRY</scope>
</reference>
<reference key="7">
    <citation type="journal article" date="2009" name="Curr. Genet.">
        <title>Ccm1p/Ygr150cp, a pentatricopeptide repeat protein, is essential to remove the fourth intron of both COB and COX1 pre-mRNAs in Saccharomyces cerevisiae.</title>
        <authorList>
            <person name="Moreno J.I."/>
            <person name="Buie K.S."/>
            <person name="Price R.E."/>
            <person name="Piva M.A."/>
        </authorList>
    </citation>
    <scope>FUNCTION</scope>
</reference>
<reference key="8">
    <citation type="journal article" date="2009" name="Genome Biol.">
        <title>Genome-wide deletion mutant analysis reveals genes required for respiratory growth, mitochondrial genome maintenance and mitochondrial protein synthesis in Saccharomyces cerevisiae.</title>
        <authorList>
            <person name="Merz S."/>
            <person name="Westermann B."/>
        </authorList>
    </citation>
    <scope>FUNCTION</scope>
</reference>
<reference key="9">
    <citation type="journal article" date="2010" name="Genetics">
        <title>DMR1 (CCM1/YGR150C) of Saccharomyces cerevisiae encodes an RNA-binding protein from the pentatricopeptide repeat family required for the maintenance of the mitochondrial 15S ribosomal RNA.</title>
        <authorList>
            <person name="Puchta O."/>
            <person name="Lubas M."/>
            <person name="Lipinski K.A."/>
            <person name="Piatkowski J."/>
            <person name="Malecki M."/>
            <person name="Golik P."/>
        </authorList>
    </citation>
    <scope>SUBCELLULAR LOCATION</scope>
    <scope>RNA-BINDING</scope>
    <scope>FUNCTION</scope>
</reference>
<reference key="10">
    <citation type="journal article" date="2011" name="Mol. Biol. Evol.">
        <title>Revisiting the yeast PPR proteins--application of an Iterative Hidden Markov Model algorithm reveals new members of the rapidly evolving family.</title>
        <authorList>
            <person name="Lipinski K.A."/>
            <person name="Puchta O."/>
            <person name="Surendranath V."/>
            <person name="Kudla M."/>
            <person name="Golik P."/>
        </authorList>
    </citation>
    <scope>MUTAGENESIS OF THR-351 AND ASP-785</scope>
</reference>
<reference key="11">
    <citation type="journal article" date="2012" name="Biosci. Rep.">
        <title>Two independent activities define Ccm1p as a moonlighting protein in Saccharomyces cerevisiae.</title>
        <authorList>
            <person name="Moreno J.I."/>
            <person name="Patlolla B."/>
            <person name="Belton K.R."/>
            <person name="Jenkins B.C."/>
            <person name="Radchenkova P.V."/>
            <person name="Piva M.A."/>
        </authorList>
    </citation>
    <scope>FUNCTION</scope>
</reference>
<reference key="12">
    <citation type="journal article" date="2017" name="EMBO Rep.">
        <title>Mitochondrial-nuclear co-evolution leads to hybrid incompatibility through pentatricopeptide repeat proteins.</title>
        <authorList>
            <person name="Jhuang H.Y."/>
            <person name="Lee H.Y."/>
            <person name="Leu J.Y."/>
        </authorList>
    </citation>
    <scope>FUNCTION</scope>
</reference>
<reference key="13">
    <citation type="journal article" date="2020" name="Curr. Genet.">
        <title>Ccm1p is a 15S rRNA primary transcript processing factor as elucidated by a novel in vivo system in Saccharomyces cerevisiae.</title>
        <authorList>
            <person name="Moreno J.I."/>
            <person name="Coleman I.S."/>
            <person name="Johnson C.L."/>
            <person name="Green D.S."/>
            <person name="Piva M.A."/>
        </authorList>
    </citation>
    <scope>FUNCTION</scope>
</reference>
<reference key="14">
    <citation type="journal article" date="2020" name="RNA">
        <title>Yeast pentatricopeptide protein Dmr1 (Ccm1) binds a repetitive AU-rich motif in the small subunit mitochondrial ribosomal RNA.</title>
        <authorList>
            <person name="Piatkowski J."/>
            <person name="Golik P."/>
        </authorList>
    </citation>
    <scope>FUNCTION</scope>
    <scope>SUBUNIT</scope>
</reference>
<reference evidence="20 21" key="15">
    <citation type="journal article" date="2023" name="Nature">
        <title>Principles of mitoribosomal small subunit assembly in eukaryotes.</title>
        <authorList>
            <person name="Harper N.J."/>
            <person name="Burnside C."/>
            <person name="Klinge S."/>
        </authorList>
    </citation>
    <scope>STRUCTURE BY ELECTRON MICROSCOPY (3.13 ANGSTROMS)</scope>
    <scope>FUNCTION</scope>
    <scope>SUBUNIT</scope>
</reference>
<accession>P48237</accession>
<accession>D6VUT1</accession>
<comment type="function">
    <text evidence="7 8 9 11 13 15">Regulates mitochondrial small subunit maturation by controlling 15S rRNA 5'-end processing (PubMed:22861139, PubMed:32152734, PubMed:36482135). Localizes to the 5' precursor of the 15S rRNA in a position that is subsequently occupied by mS47 in the mature yeast mtSSU. Uses structure and sequence-specific RNA recognition, binding to a single-stranded region of the precursor and specifically recognizing bases -6 to -1. The exchange of Ccm1 for mS47 is coupled to the irreversible removal of precursor rRNA that is accompanied by conformational changes of the mitoribosomal proteins uS5m and mS26. These conformational changes signal completion of 5'-end rRNA processing through protection of the mature 5'-end of the 15S rRNA and stabilization of mS47. The removal of the 5' precursor together with the dissociation of Ccm1 may be catalyzed by the 5'-3' exoribonuclease Pet127 (PubMed:36482135). Involved in the specific removal of group I introns in mitochondrial encoded transcripts (PubMed:19562342, PubMed:19751518, PubMed:20124025, PubMed:22861139).</text>
</comment>
<comment type="subunit">
    <text evidence="14 15">Binds to mitochondrial small subunit 15S rRNA.</text>
</comment>
<comment type="subcellular location">
    <subcellularLocation>
        <location evidence="4 6 9">Mitochondrion</location>
    </subcellularLocation>
</comment>
<comment type="miscellaneous">
    <text evidence="5">Present with 876 molecules/cell in log phase SD medium.</text>
</comment>
<comment type="miscellaneous">
    <text evidence="12">Involved in mitochondrial-nuclear incompatibility, a major determinant in reproductive isolation between species, through hybrid incompatibility of Ccm1 and its interacting partner 15S rRNA between yeast species.</text>
</comment>
<comment type="similarity">
    <text evidence="19">Belongs to the CCM1 family.</text>
</comment>
<feature type="transit peptide" description="Mitochondrion" evidence="1">
    <location>
        <begin position="1"/>
        <end position="76"/>
    </location>
</feature>
<feature type="chain" id="PRO_0000202830" description="Mitochondrial 15S rRNA processing factor CCM1" evidence="1">
    <location>
        <begin position="77"/>
        <end position="864"/>
    </location>
</feature>
<feature type="repeat" description="PPR 1" evidence="2">
    <location>
        <begin position="319"/>
        <end position="353"/>
    </location>
</feature>
<feature type="repeat" description="PPR 2" evidence="2">
    <location>
        <begin position="356"/>
        <end position="390"/>
    </location>
</feature>
<feature type="region of interest" description="Disordered" evidence="3">
    <location>
        <begin position="80"/>
        <end position="117"/>
    </location>
</feature>
<feature type="compositionally biased region" description="Polar residues" evidence="3">
    <location>
        <begin position="80"/>
        <end position="94"/>
    </location>
</feature>
<feature type="compositionally biased region" description="Polar residues" evidence="3">
    <location>
        <begin position="102"/>
        <end position="112"/>
    </location>
</feature>
<feature type="mutagenesis site" description="In dmr1-2; mildly impairs respiratory growth and has almost wild-type mitochondrial protein synthesis; when associated with V-785." evidence="10">
    <original>T</original>
    <variation>A</variation>
    <location>
        <position position="351"/>
    </location>
</feature>
<feature type="mutagenesis site" description="In dmr1-1; impairs respiratory growth and mitochondrial protein synthesis. In dmr1-2; mildly impairs respiratory growth and has almost wild-type mitochondrial protein synthesis; when associated with A-351." evidence="10">
    <original>D</original>
    <variation>V</variation>
    <location>
        <position position="785"/>
    </location>
</feature>
<feature type="helix" evidence="22">
    <location>
        <begin position="149"/>
        <end position="153"/>
    </location>
</feature>
<feature type="strand" evidence="22">
    <location>
        <begin position="156"/>
        <end position="158"/>
    </location>
</feature>
<feature type="helix" evidence="22">
    <location>
        <begin position="163"/>
        <end position="171"/>
    </location>
</feature>
<feature type="strand" evidence="22">
    <location>
        <begin position="172"/>
        <end position="174"/>
    </location>
</feature>
<feature type="turn" evidence="22">
    <location>
        <begin position="175"/>
        <end position="178"/>
    </location>
</feature>
<feature type="helix" evidence="22">
    <location>
        <begin position="181"/>
        <end position="191"/>
    </location>
</feature>
<feature type="helix" evidence="22">
    <location>
        <begin position="197"/>
        <end position="210"/>
    </location>
</feature>
<feature type="turn" evidence="22">
    <location>
        <begin position="211"/>
        <end position="213"/>
    </location>
</feature>
<feature type="turn" evidence="22">
    <location>
        <begin position="215"/>
        <end position="217"/>
    </location>
</feature>
<feature type="helix" evidence="22">
    <location>
        <begin position="220"/>
        <end position="232"/>
    </location>
</feature>
<feature type="helix" evidence="22">
    <location>
        <begin position="246"/>
        <end position="269"/>
    </location>
</feature>
<feature type="helix" evidence="22">
    <location>
        <begin position="284"/>
        <end position="297"/>
    </location>
</feature>
<feature type="helix" evidence="22">
    <location>
        <begin position="300"/>
        <end position="314"/>
    </location>
</feature>
<feature type="helix" evidence="22">
    <location>
        <begin position="320"/>
        <end position="332"/>
    </location>
</feature>
<feature type="helix" evidence="22">
    <location>
        <begin position="336"/>
        <end position="349"/>
    </location>
</feature>
<feature type="helix" evidence="22">
    <location>
        <begin position="357"/>
        <end position="370"/>
    </location>
</feature>
<feature type="helix" evidence="22">
    <location>
        <begin position="373"/>
        <end position="385"/>
    </location>
</feature>
<feature type="helix" evidence="22">
    <location>
        <begin position="392"/>
        <end position="405"/>
    </location>
</feature>
<feature type="helix" evidence="22">
    <location>
        <begin position="409"/>
        <end position="412"/>
    </location>
</feature>
<feature type="helix" evidence="22">
    <location>
        <begin position="416"/>
        <end position="432"/>
    </location>
</feature>
<feature type="helix" evidence="22">
    <location>
        <begin position="441"/>
        <end position="455"/>
    </location>
</feature>
<feature type="helix" evidence="22">
    <location>
        <begin position="459"/>
        <end position="479"/>
    </location>
</feature>
<feature type="turn" evidence="22">
    <location>
        <begin position="485"/>
        <end position="488"/>
    </location>
</feature>
<feature type="helix" evidence="22">
    <location>
        <begin position="489"/>
        <end position="496"/>
    </location>
</feature>
<feature type="helix" evidence="22">
    <location>
        <begin position="499"/>
        <end position="510"/>
    </location>
</feature>
<feature type="helix" evidence="22">
    <location>
        <begin position="519"/>
        <end position="521"/>
    </location>
</feature>
<feature type="helix" evidence="22">
    <location>
        <begin position="524"/>
        <end position="542"/>
    </location>
</feature>
<feature type="strand" evidence="22">
    <location>
        <begin position="558"/>
        <end position="561"/>
    </location>
</feature>
<feature type="helix" evidence="22">
    <location>
        <begin position="565"/>
        <end position="580"/>
    </location>
</feature>
<feature type="turn" evidence="22">
    <location>
        <begin position="581"/>
        <end position="585"/>
    </location>
</feature>
<feature type="helix" evidence="22">
    <location>
        <begin position="593"/>
        <end position="613"/>
    </location>
</feature>
<feature type="strand" evidence="22">
    <location>
        <begin position="614"/>
        <end position="616"/>
    </location>
</feature>
<feature type="helix" evidence="22">
    <location>
        <begin position="617"/>
        <end position="635"/>
    </location>
</feature>
<feature type="turn" evidence="22">
    <location>
        <begin position="638"/>
        <end position="640"/>
    </location>
</feature>
<feature type="helix" evidence="22">
    <location>
        <begin position="643"/>
        <end position="656"/>
    </location>
</feature>
<feature type="helix" evidence="22">
    <location>
        <begin position="659"/>
        <end position="669"/>
    </location>
</feature>
<feature type="helix" evidence="22">
    <location>
        <begin position="673"/>
        <end position="688"/>
    </location>
</feature>
<feature type="helix" evidence="22">
    <location>
        <begin position="719"/>
        <end position="729"/>
    </location>
</feature>
<feature type="helix" evidence="22">
    <location>
        <begin position="730"/>
        <end position="732"/>
    </location>
</feature>
<feature type="helix" evidence="22">
    <location>
        <begin position="738"/>
        <end position="751"/>
    </location>
</feature>
<feature type="helix" evidence="22">
    <location>
        <begin position="754"/>
        <end position="769"/>
    </location>
</feature>
<feature type="helix" evidence="22">
    <location>
        <begin position="771"/>
        <end position="775"/>
    </location>
</feature>
<feature type="helix" evidence="22">
    <location>
        <begin position="778"/>
        <end position="799"/>
    </location>
</feature>
<feature type="helix" evidence="22">
    <location>
        <begin position="802"/>
        <end position="811"/>
    </location>
</feature>
<feature type="turn" evidence="22">
    <location>
        <begin position="812"/>
        <end position="815"/>
    </location>
</feature>
<feature type="turn" evidence="22">
    <location>
        <begin position="820"/>
        <end position="823"/>
    </location>
</feature>
<feature type="helix" evidence="22">
    <location>
        <begin position="824"/>
        <end position="833"/>
    </location>
</feature>
<feature type="helix" evidence="22">
    <location>
        <begin position="836"/>
        <end position="847"/>
    </location>
</feature>
<protein>
    <recommendedName>
        <fullName evidence="19">Mitochondrial 15S rRNA processing factor CCM1</fullName>
    </recommendedName>
    <alternativeName>
        <fullName evidence="16">COB and COX1 mRNA maturation protein 1</fullName>
    </alternativeName>
    <alternativeName>
        <fullName evidence="18">Degradation of mitochondrial rRNA protein 1</fullName>
    </alternativeName>
    <alternativeName>
        <fullName evidence="17">Required for respiratory growth protein 2</fullName>
    </alternativeName>
</protein>
<proteinExistence type="evidence at protein level"/>
<organism>
    <name type="scientific">Saccharomyces cerevisiae (strain ATCC 204508 / S288c)</name>
    <name type="common">Baker's yeast</name>
    <dbReference type="NCBI Taxonomy" id="559292"/>
    <lineage>
        <taxon>Eukaryota</taxon>
        <taxon>Fungi</taxon>
        <taxon>Dikarya</taxon>
        <taxon>Ascomycota</taxon>
        <taxon>Saccharomycotina</taxon>
        <taxon>Saccharomycetes</taxon>
        <taxon>Saccharomycetales</taxon>
        <taxon>Saccharomycetaceae</taxon>
        <taxon>Saccharomyces</taxon>
    </lineage>
</organism>